<protein>
    <recommendedName>
        <fullName>Hepatic leukemia factor</fullName>
    </recommendedName>
</protein>
<comment type="subunit">
    <text evidence="1">Binds DNA specifically as homodimer or heterodimer with other PAR factors.</text>
</comment>
<comment type="subcellular location">
    <subcellularLocation>
        <location evidence="5">Nucleus</location>
    </subcellularLocation>
</comment>
<comment type="alternative products">
    <event type="alternative splicing"/>
    <event type="alternative initiation"/>
    <isoform>
        <id>Q64709-1</id>
        <name>HLF43</name>
        <sequence type="displayed"/>
    </isoform>
    <isoform>
        <id>Q64709-2</id>
        <name>HLF17</name>
        <sequence type="described" ref="VSP_018687 VSP_018688 VSP_000585"/>
    </isoform>
    <isoform>
        <id>Q64709-3</id>
        <name>HLF24</name>
        <sequence type="described" ref="VSP_000584"/>
    </isoform>
    <isoform>
        <id>Q64709-4</id>
        <name>HLF36</name>
        <sequence type="described" ref="VSP_018687 VSP_018688"/>
    </isoform>
</comment>
<comment type="tissue specificity">
    <text>Isoform HLF43 is abundant in brain, liver and kidney. Isoform HLF36 is expressed only in the liver. Both isoforms accumulate in the liver with different circadian amplitudes. Isoform HLF36 reaches peak expression levels between 8 and 12 p.m. Isoform HLF43 displays a more pronounced fluctuation through the day.</text>
</comment>
<comment type="induction">
    <text>Accumulates according to a robust circadian rhythm.</text>
</comment>
<comment type="miscellaneous">
    <molecule>Isoform HLF17</molecule>
    <text evidence="5">Produced by alternative initiation at an unusual initiation codon at position 50.</text>
</comment>
<comment type="miscellaneous">
    <molecule>Isoform HLF24</molecule>
    <text evidence="5">Produced by alternative splicing.</text>
</comment>
<comment type="miscellaneous">
    <molecule>Isoform HLF36</molecule>
    <text evidence="5">Produced by alternative initiation at an unusual initiation codon at position 50.</text>
</comment>
<comment type="similarity">
    <text evidence="5">Belongs to the bZIP family. PAR subfamily.</text>
</comment>
<proteinExistence type="evidence at transcript level"/>
<keyword id="KW-0024">Alternative initiation</keyword>
<keyword id="KW-0025">Alternative splicing</keyword>
<keyword id="KW-0090">Biological rhythms</keyword>
<keyword id="KW-0238">DNA-binding</keyword>
<keyword id="KW-0539">Nucleus</keyword>
<keyword id="KW-1185">Reference proteome</keyword>
<keyword id="KW-0804">Transcription</keyword>
<keyword id="KW-0805">Transcription regulation</keyword>
<reference key="1">
    <citation type="journal article" date="1995" name="EMBO J.">
        <title>The rat hepatic leukemia factor (HLF) gene encodes two transcriptional activators with distinct circadian rhythms, tissue distributions and target preferences.</title>
        <authorList>
            <person name="Falvey E."/>
            <person name="Fleury-Olela F."/>
            <person name="Schibler U."/>
        </authorList>
    </citation>
    <scope>NUCLEOTIDE SEQUENCE [MRNA] (ISOFORMS HLF43; HLF17 AND HLF24)</scope>
    <scope>ALTERNATIVE INITIATION</scope>
    <source>
        <tissue>Liver</tissue>
    </source>
</reference>
<gene>
    <name type="primary">Hlf</name>
</gene>
<organism>
    <name type="scientific">Rattus norvegicus</name>
    <name type="common">Rat</name>
    <dbReference type="NCBI Taxonomy" id="10116"/>
    <lineage>
        <taxon>Eukaryota</taxon>
        <taxon>Metazoa</taxon>
        <taxon>Chordata</taxon>
        <taxon>Craniata</taxon>
        <taxon>Vertebrata</taxon>
        <taxon>Euteleostomi</taxon>
        <taxon>Mammalia</taxon>
        <taxon>Eutheria</taxon>
        <taxon>Euarchontoglires</taxon>
        <taxon>Glires</taxon>
        <taxon>Rodentia</taxon>
        <taxon>Myomorpha</taxon>
        <taxon>Muroidea</taxon>
        <taxon>Muridae</taxon>
        <taxon>Murinae</taxon>
        <taxon>Rattus</taxon>
    </lineage>
</organism>
<feature type="chain" id="PRO_0000003514" description="Hepatic leukemia factor">
    <location>
        <begin position="1"/>
        <end position="295"/>
    </location>
</feature>
<feature type="domain" description="bZIP" evidence="2">
    <location>
        <begin position="225"/>
        <end position="288"/>
    </location>
</feature>
<feature type="region of interest" description="Disordered" evidence="3">
    <location>
        <begin position="34"/>
        <end position="69"/>
    </location>
</feature>
<feature type="region of interest" description="Disordered" evidence="3">
    <location>
        <begin position="93"/>
        <end position="160"/>
    </location>
</feature>
<feature type="region of interest" description="Basic motif" evidence="2">
    <location>
        <begin position="227"/>
        <end position="247"/>
    </location>
</feature>
<feature type="region of interest" description="Leucine-zipper" evidence="2">
    <location>
        <begin position="248"/>
        <end position="255"/>
    </location>
</feature>
<feature type="compositionally biased region" description="Basic and acidic residues" evidence="3">
    <location>
        <begin position="34"/>
        <end position="52"/>
    </location>
</feature>
<feature type="splice variant" id="VSP_018687" description="In isoform HLF17 and isoform HLF36." evidence="4">
    <location>
        <begin position="1"/>
        <end position="49"/>
    </location>
</feature>
<feature type="splice variant" id="VSP_018688" description="In isoform HLF17 and isoform HLF36." evidence="4">
    <original>L</original>
    <variation>M</variation>
    <location>
        <position position="50"/>
    </location>
</feature>
<feature type="splice variant" id="VSP_000584" description="In isoform HLF24." evidence="4">
    <location>
        <begin position="170"/>
        <end position="295"/>
    </location>
</feature>
<feature type="splice variant" id="VSP_000585" description="In isoform HLF17." evidence="4">
    <location>
        <begin position="171"/>
        <end position="295"/>
    </location>
</feature>
<dbReference type="EMBL" id="S79820">
    <property type="protein sequence ID" value="AAB35322.1"/>
    <property type="molecule type" value="mRNA"/>
</dbReference>
<dbReference type="PIR" id="S58525">
    <property type="entry name" value="S58525"/>
</dbReference>
<dbReference type="SMR" id="Q64709"/>
<dbReference type="FunCoup" id="Q64709">
    <property type="interactions" value="753"/>
</dbReference>
<dbReference type="STRING" id="10116.ENSRNOP00000052527"/>
<dbReference type="iPTMnet" id="Q64709"/>
<dbReference type="PhosphoSitePlus" id="Q64709"/>
<dbReference type="PaxDb" id="10116-ENSRNOP00000052527"/>
<dbReference type="AGR" id="RGD:1582828"/>
<dbReference type="RGD" id="1582828">
    <property type="gene designation" value="Hlf"/>
</dbReference>
<dbReference type="eggNOG" id="KOG3119">
    <property type="taxonomic scope" value="Eukaryota"/>
</dbReference>
<dbReference type="InParanoid" id="Q64709"/>
<dbReference type="PhylomeDB" id="Q64709"/>
<dbReference type="PRO" id="PR:Q64709"/>
<dbReference type="Proteomes" id="UP000002494">
    <property type="component" value="Unplaced"/>
</dbReference>
<dbReference type="GO" id="GO:0005634">
    <property type="term" value="C:nucleus"/>
    <property type="evidence" value="ECO:0000318"/>
    <property type="project" value="GO_Central"/>
</dbReference>
<dbReference type="GO" id="GO:0090575">
    <property type="term" value="C:RNA polymerase II transcription regulator complex"/>
    <property type="evidence" value="ECO:0000266"/>
    <property type="project" value="RGD"/>
</dbReference>
<dbReference type="GO" id="GO:0001228">
    <property type="term" value="F:DNA-binding transcription activator activity, RNA polymerase II-specific"/>
    <property type="evidence" value="ECO:0000266"/>
    <property type="project" value="RGD"/>
</dbReference>
<dbReference type="GO" id="GO:0000981">
    <property type="term" value="F:DNA-binding transcription factor activity, RNA polymerase II-specific"/>
    <property type="evidence" value="ECO:0000318"/>
    <property type="project" value="GO_Central"/>
</dbReference>
<dbReference type="GO" id="GO:0000978">
    <property type="term" value="F:RNA polymerase II cis-regulatory region sequence-specific DNA binding"/>
    <property type="evidence" value="ECO:0000318"/>
    <property type="project" value="GO_Central"/>
</dbReference>
<dbReference type="GO" id="GO:0043565">
    <property type="term" value="F:sequence-specific DNA binding"/>
    <property type="evidence" value="ECO:0000266"/>
    <property type="project" value="RGD"/>
</dbReference>
<dbReference type="GO" id="GO:1990837">
    <property type="term" value="F:sequence-specific double-stranded DNA binding"/>
    <property type="evidence" value="ECO:0000266"/>
    <property type="project" value="RGD"/>
</dbReference>
<dbReference type="GO" id="GO:0045944">
    <property type="term" value="P:positive regulation of transcription by RNA polymerase II"/>
    <property type="evidence" value="ECO:0000266"/>
    <property type="project" value="RGD"/>
</dbReference>
<dbReference type="GO" id="GO:0006357">
    <property type="term" value="P:regulation of transcription by RNA polymerase II"/>
    <property type="evidence" value="ECO:0000318"/>
    <property type="project" value="GO_Central"/>
</dbReference>
<dbReference type="GO" id="GO:0048511">
    <property type="term" value="P:rhythmic process"/>
    <property type="evidence" value="ECO:0007669"/>
    <property type="project" value="UniProtKB-KW"/>
</dbReference>
<dbReference type="GO" id="GO:0035914">
    <property type="term" value="P:skeletal muscle cell differentiation"/>
    <property type="evidence" value="ECO:0000266"/>
    <property type="project" value="RGD"/>
</dbReference>
<dbReference type="CDD" id="cd14695">
    <property type="entry name" value="bZIP_HLF"/>
    <property type="match status" value="1"/>
</dbReference>
<dbReference type="FunFam" id="1.20.5.170:FF:000007">
    <property type="entry name" value="hepatic leukemia factor isoform X2"/>
    <property type="match status" value="1"/>
</dbReference>
<dbReference type="Gene3D" id="1.20.5.170">
    <property type="match status" value="1"/>
</dbReference>
<dbReference type="InterPro" id="IPR004827">
    <property type="entry name" value="bZIP"/>
</dbReference>
<dbReference type="InterPro" id="IPR046347">
    <property type="entry name" value="bZIP_sf"/>
</dbReference>
<dbReference type="InterPro" id="IPR040223">
    <property type="entry name" value="PAR_bZIP"/>
</dbReference>
<dbReference type="PANTHER" id="PTHR11988:SF28">
    <property type="entry name" value="HEPATIC LEUKEMIA FACTOR"/>
    <property type="match status" value="1"/>
</dbReference>
<dbReference type="PANTHER" id="PTHR11988">
    <property type="entry name" value="THYROTROPH EMBRYONIC FACTOR RELATED"/>
    <property type="match status" value="1"/>
</dbReference>
<dbReference type="Pfam" id="PF07716">
    <property type="entry name" value="bZIP_2"/>
    <property type="match status" value="1"/>
</dbReference>
<dbReference type="SMART" id="SM00338">
    <property type="entry name" value="BRLZ"/>
    <property type="match status" value="1"/>
</dbReference>
<dbReference type="SUPFAM" id="SSF57959">
    <property type="entry name" value="Leucine zipper domain"/>
    <property type="match status" value="1"/>
</dbReference>
<dbReference type="PROSITE" id="PS50217">
    <property type="entry name" value="BZIP"/>
    <property type="match status" value="1"/>
</dbReference>
<evidence type="ECO:0000250" key="1"/>
<evidence type="ECO:0000255" key="2">
    <source>
        <dbReference type="PROSITE-ProRule" id="PRU00978"/>
    </source>
</evidence>
<evidence type="ECO:0000256" key="3">
    <source>
        <dbReference type="SAM" id="MobiDB-lite"/>
    </source>
</evidence>
<evidence type="ECO:0000303" key="4">
    <source>
    </source>
</evidence>
<evidence type="ECO:0000305" key="5"/>
<sequence length="295" mass="33114">MEKMSRQLPLNPTFIPPPYGVLRSLLENPLKLPLHPEDAFSKDRDKGKKLDDGSNSPTVPQSAFLGPTLWDKTLPYDGDTFQLEYMDLEEFLSENGIPPSPSQHDHSPHPPGLQPASSTAPSVMDLSSRATAPLHPGIPSPNCMQNPIRPGQLLPANRNTPSPIDPDTIQVPVGYEPDPADLALSSIPGPEMFDPRKRKFSEEELKPQPMIKKARKVFIPDDLKDDKYWARRRKNNMAAKRSRDARRLKENQIAIRASFLEKENSALRQEVADLRKELGKCKNILAKYEARHGPL</sequence>
<name>HLF_RAT</name>
<accession>Q64709</accession>
<accession>Q64708</accession>